<organism>
    <name type="scientific">Escherichia coli (strain K12)</name>
    <dbReference type="NCBI Taxonomy" id="83333"/>
    <lineage>
        <taxon>Bacteria</taxon>
        <taxon>Pseudomonadati</taxon>
        <taxon>Pseudomonadota</taxon>
        <taxon>Gammaproteobacteria</taxon>
        <taxon>Enterobacterales</taxon>
        <taxon>Enterobacteriaceae</taxon>
        <taxon>Escherichia</taxon>
    </lineage>
</organism>
<gene>
    <name type="primary">zapB</name>
    <name type="synonym">yiiU</name>
    <name type="ordered locus">b3928</name>
    <name type="ordered locus">JW3899</name>
</gene>
<feature type="chain" id="PRO_0000169693" description="Cell division protein ZapB">
    <location>
        <begin position="1"/>
        <end position="81"/>
    </location>
</feature>
<feature type="region of interest" description="Disordered" evidence="2">
    <location>
        <begin position="36"/>
        <end position="67"/>
    </location>
</feature>
<feature type="coiled-coil region" evidence="1">
    <location>
        <begin position="5"/>
        <end position="81"/>
    </location>
</feature>
<feature type="compositionally biased region" description="Polar residues" evidence="2">
    <location>
        <begin position="37"/>
        <end position="47"/>
    </location>
</feature>
<feature type="compositionally biased region" description="Basic and acidic residues" evidence="2">
    <location>
        <begin position="48"/>
        <end position="62"/>
    </location>
</feature>
<feature type="modified residue" description="N6-acetyllysine" evidence="4">
    <location>
        <position position="10"/>
    </location>
</feature>
<feature type="helix" evidence="6">
    <location>
        <begin position="5"/>
        <end position="78"/>
    </location>
</feature>
<proteinExistence type="evidence at protein level"/>
<evidence type="ECO:0000255" key="1"/>
<evidence type="ECO:0000256" key="2">
    <source>
        <dbReference type="SAM" id="MobiDB-lite"/>
    </source>
</evidence>
<evidence type="ECO:0000269" key="3">
    <source>
    </source>
</evidence>
<evidence type="ECO:0000269" key="4">
    <source>
    </source>
</evidence>
<evidence type="ECO:0000305" key="5"/>
<evidence type="ECO:0007829" key="6">
    <source>
        <dbReference type="PDB" id="2JEE"/>
    </source>
</evidence>
<comment type="function">
    <text evidence="3">Non-essential, abundant cell division factor that is required for proper Z-ring formation. It is recruited early to the divisome by direct interaction with FtsZ, stimulating Z-ring assembly and thereby promoting cell division earlier in the cell cycle. Its recruitment to the Z-ring requires functional FtsA or ZipA.</text>
</comment>
<comment type="subunit">
    <text evidence="3">Homodimer. The ends of the coiled-coil dimer bind to each other, forming polymers. Interacts with FtsZ.</text>
</comment>
<comment type="interaction">
    <interactant intactId="EBI-1134093">
        <id>P0AF36</id>
    </interactant>
    <interactant intactId="EBI-1119901">
        <id>P0ADS2</id>
        <label>zapA</label>
    </interactant>
    <organismsDiffer>false</organismsDiffer>
    <experiments>4</experiments>
</comment>
<comment type="subcellular location">
    <subcellularLocation>
        <location evidence="3">Cytoplasm</location>
    </subcellularLocation>
    <text>Localizes to the septum at mid-cell, in a FtsZ-like pattern.</text>
</comment>
<comment type="similarity">
    <text evidence="5">Belongs to the ZapB family.</text>
</comment>
<dbReference type="EMBL" id="L19201">
    <property type="protein sequence ID" value="AAB03060.1"/>
    <property type="molecule type" value="Genomic_DNA"/>
</dbReference>
<dbReference type="EMBL" id="U00096">
    <property type="protein sequence ID" value="AAC76910.1"/>
    <property type="molecule type" value="Genomic_DNA"/>
</dbReference>
<dbReference type="EMBL" id="AP009048">
    <property type="protein sequence ID" value="BAE77382.1"/>
    <property type="molecule type" value="Genomic_DNA"/>
</dbReference>
<dbReference type="PIR" id="S40871">
    <property type="entry name" value="S40871"/>
</dbReference>
<dbReference type="RefSeq" id="NP_418363.1">
    <property type="nucleotide sequence ID" value="NC_000913.3"/>
</dbReference>
<dbReference type="RefSeq" id="WP_001296623.1">
    <property type="nucleotide sequence ID" value="NZ_STEB01000017.1"/>
</dbReference>
<dbReference type="PDB" id="2JEE">
    <property type="method" value="X-ray"/>
    <property type="resolution" value="2.80 A"/>
    <property type="chains" value="A/B/C/D=1-81"/>
</dbReference>
<dbReference type="PDBsum" id="2JEE"/>
<dbReference type="SMR" id="P0AF36"/>
<dbReference type="BioGRID" id="4262648">
    <property type="interactions" value="242"/>
</dbReference>
<dbReference type="DIP" id="DIP-35850N"/>
<dbReference type="FunCoup" id="P0AF36">
    <property type="interactions" value="87"/>
</dbReference>
<dbReference type="IntAct" id="P0AF36">
    <property type="interactions" value="5"/>
</dbReference>
<dbReference type="STRING" id="511145.b3928"/>
<dbReference type="iPTMnet" id="P0AF36"/>
<dbReference type="jPOST" id="P0AF36"/>
<dbReference type="PaxDb" id="511145-b3928"/>
<dbReference type="EnsemblBacteria" id="AAC76910">
    <property type="protein sequence ID" value="AAC76910"/>
    <property type="gene ID" value="b3928"/>
</dbReference>
<dbReference type="GeneID" id="93777970"/>
<dbReference type="GeneID" id="948420"/>
<dbReference type="KEGG" id="ecj:JW3899"/>
<dbReference type="KEGG" id="eco:b3928"/>
<dbReference type="PATRIC" id="fig|511145.12.peg.4046"/>
<dbReference type="EchoBASE" id="EB1824"/>
<dbReference type="eggNOG" id="COG3074">
    <property type="taxonomic scope" value="Bacteria"/>
</dbReference>
<dbReference type="HOGENOM" id="CLU_171174_2_0_6"/>
<dbReference type="InParanoid" id="P0AF36"/>
<dbReference type="OMA" id="REQQNGW"/>
<dbReference type="OrthoDB" id="6554593at2"/>
<dbReference type="PhylomeDB" id="P0AF36"/>
<dbReference type="BioCyc" id="EcoCyc:EG11878-MONOMER"/>
<dbReference type="EvolutionaryTrace" id="P0AF36"/>
<dbReference type="PRO" id="PR:P0AF36"/>
<dbReference type="Proteomes" id="UP000000625">
    <property type="component" value="Chromosome"/>
</dbReference>
<dbReference type="GO" id="GO:0032153">
    <property type="term" value="C:cell division site"/>
    <property type="evidence" value="ECO:0000314"/>
    <property type="project" value="EcoCyc"/>
</dbReference>
<dbReference type="GO" id="GO:0005829">
    <property type="term" value="C:cytosol"/>
    <property type="evidence" value="ECO:0000314"/>
    <property type="project" value="EcoCyc"/>
</dbReference>
<dbReference type="GO" id="GO:0042802">
    <property type="term" value="F:identical protein binding"/>
    <property type="evidence" value="ECO:0000314"/>
    <property type="project" value="EcoCyc"/>
</dbReference>
<dbReference type="GO" id="GO:0000917">
    <property type="term" value="P:division septum assembly"/>
    <property type="evidence" value="ECO:0007669"/>
    <property type="project" value="UniProtKB-KW"/>
</dbReference>
<dbReference type="GO" id="GO:0043093">
    <property type="term" value="P:FtsZ-dependent cytokinesis"/>
    <property type="evidence" value="ECO:0000315"/>
    <property type="project" value="EcoCyc"/>
</dbReference>
<dbReference type="FunFam" id="1.20.5.340:FF:000014">
    <property type="entry name" value="Cell division protein ZapB"/>
    <property type="match status" value="1"/>
</dbReference>
<dbReference type="Gene3D" id="1.20.5.340">
    <property type="match status" value="1"/>
</dbReference>
<dbReference type="HAMAP" id="MF_01196">
    <property type="entry name" value="ZapB"/>
    <property type="match status" value="1"/>
</dbReference>
<dbReference type="InterPro" id="IPR009252">
    <property type="entry name" value="Cell_div_ZapB"/>
</dbReference>
<dbReference type="NCBIfam" id="NF011951">
    <property type="entry name" value="PRK15422.1"/>
    <property type="match status" value="1"/>
</dbReference>
<dbReference type="Pfam" id="PF06005">
    <property type="entry name" value="ZapB"/>
    <property type="match status" value="1"/>
</dbReference>
<reference key="1">
    <citation type="journal article" date="1993" name="Nucleic Acids Res.">
        <title>Analysis of the Escherichia coli genome. III. DNA sequence of the region from 87.2 to 89.2 minutes.</title>
        <authorList>
            <person name="Plunkett G. III"/>
            <person name="Burland V."/>
            <person name="Daniels D.L."/>
            <person name="Blattner F.R."/>
        </authorList>
    </citation>
    <scope>NUCLEOTIDE SEQUENCE [LARGE SCALE GENOMIC DNA]</scope>
    <source>
        <strain>K12 / MG1655 / ATCC 47076</strain>
    </source>
</reference>
<reference key="2">
    <citation type="journal article" date="1997" name="Science">
        <title>The complete genome sequence of Escherichia coli K-12.</title>
        <authorList>
            <person name="Blattner F.R."/>
            <person name="Plunkett G. III"/>
            <person name="Bloch C.A."/>
            <person name="Perna N.T."/>
            <person name="Burland V."/>
            <person name="Riley M."/>
            <person name="Collado-Vides J."/>
            <person name="Glasner J.D."/>
            <person name="Rode C.K."/>
            <person name="Mayhew G.F."/>
            <person name="Gregor J."/>
            <person name="Davis N.W."/>
            <person name="Kirkpatrick H.A."/>
            <person name="Goeden M.A."/>
            <person name="Rose D.J."/>
            <person name="Mau B."/>
            <person name="Shao Y."/>
        </authorList>
    </citation>
    <scope>NUCLEOTIDE SEQUENCE [LARGE SCALE GENOMIC DNA]</scope>
    <source>
        <strain>K12 / MG1655 / ATCC 47076</strain>
    </source>
</reference>
<reference key="3">
    <citation type="journal article" date="2006" name="Mol. Syst. Biol.">
        <title>Highly accurate genome sequences of Escherichia coli K-12 strains MG1655 and W3110.</title>
        <authorList>
            <person name="Hayashi K."/>
            <person name="Morooka N."/>
            <person name="Yamamoto Y."/>
            <person name="Fujita K."/>
            <person name="Isono K."/>
            <person name="Choi S."/>
            <person name="Ohtsubo E."/>
            <person name="Baba T."/>
            <person name="Wanner B.L."/>
            <person name="Mori H."/>
            <person name="Horiuchi T."/>
        </authorList>
    </citation>
    <scope>NUCLEOTIDE SEQUENCE [LARGE SCALE GENOMIC DNA]</scope>
    <source>
        <strain>K12 / W3110 / ATCC 27325 / DSM 5911</strain>
    </source>
</reference>
<reference key="4">
    <citation type="journal article" date="2009" name="Mol. Cell. Proteomics">
        <title>Lysine acetylation is a highly abundant and evolutionarily conserved modification in Escherichia coli.</title>
        <authorList>
            <person name="Zhang J."/>
            <person name="Sprung R."/>
            <person name="Pei J."/>
            <person name="Tan X."/>
            <person name="Kim S."/>
            <person name="Zhu H."/>
            <person name="Liu C.F."/>
            <person name="Grishin N.V."/>
            <person name="Zhao Y."/>
        </authorList>
    </citation>
    <scope>ACETYLATION [LARGE SCALE ANALYSIS] AT LYS-10</scope>
    <scope>IDENTIFICATION BY MASS SPECTROMETRY</scope>
    <source>
        <strain>K12 / JW1106</strain>
        <strain>K12 / MG1655 / ATCC 47076</strain>
    </source>
</reference>
<reference key="5">
    <citation type="journal article" date="2008" name="Mol. Microbiol.">
        <title>Novel coiled-coil cell division factor ZapB stimulates Z ring assembly and cell division.</title>
        <authorList>
            <person name="Ebersbach G."/>
            <person name="Galli E."/>
            <person name="Moeller-Jensen J."/>
            <person name="Loewe J."/>
            <person name="Gerdes K."/>
        </authorList>
    </citation>
    <scope>FUNCTION IN CELL DIVISION</scope>
    <scope>COILED-COIL DOMAIN</scope>
    <scope>SUBUNIT</scope>
    <scope>INTERACTION WITH FTSZ</scope>
    <scope>SUBCELLULAR LOCATION</scope>
    <source>
        <strain>K12 / MG1655 / ATCC 47076</strain>
    </source>
</reference>
<accession>P0AF36</accession>
<accession>P32164</accession>
<accession>Q2M8M4</accession>
<sequence length="81" mass="9635">MTMSLEVFEKLEAKVQQAIDTITLLQMEIEELKEKNNSLSQEVQNAQHQREELERENNHLKEQQNGWQERLQALLGRMEEV</sequence>
<keyword id="KW-0002">3D-structure</keyword>
<keyword id="KW-0007">Acetylation</keyword>
<keyword id="KW-0131">Cell cycle</keyword>
<keyword id="KW-0132">Cell division</keyword>
<keyword id="KW-0175">Coiled coil</keyword>
<keyword id="KW-0963">Cytoplasm</keyword>
<keyword id="KW-1185">Reference proteome</keyword>
<keyword id="KW-0717">Septation</keyword>
<protein>
    <recommendedName>
        <fullName>Cell division protein ZapB</fullName>
    </recommendedName>
</protein>
<name>ZAPB_ECOLI</name>